<comment type="function">
    <text evidence="1">Catalyzes the phosphorylation of D-glycero-D-manno-heptose 7-phosphate at the C-1 position to selectively form D-glycero-beta-D-manno-heptose-1,7-bisphosphate.</text>
</comment>
<comment type="function">
    <text evidence="1">Catalyzes the ADP transfer from ATP to D-glycero-beta-D-manno-heptose 1-phosphate, yielding ADP-D-glycero-beta-D-manno-heptose.</text>
</comment>
<comment type="catalytic activity">
    <reaction evidence="1">
        <text>D-glycero-beta-D-manno-heptose 7-phosphate + ATP = D-glycero-beta-D-manno-heptose 1,7-bisphosphate + ADP + H(+)</text>
        <dbReference type="Rhea" id="RHEA:27473"/>
        <dbReference type="ChEBI" id="CHEBI:15378"/>
        <dbReference type="ChEBI" id="CHEBI:30616"/>
        <dbReference type="ChEBI" id="CHEBI:60204"/>
        <dbReference type="ChEBI" id="CHEBI:60208"/>
        <dbReference type="ChEBI" id="CHEBI:456216"/>
        <dbReference type="EC" id="2.7.1.167"/>
    </reaction>
</comment>
<comment type="catalytic activity">
    <reaction evidence="1">
        <text>D-glycero-beta-D-manno-heptose 1-phosphate + ATP + H(+) = ADP-D-glycero-beta-D-manno-heptose + diphosphate</text>
        <dbReference type="Rhea" id="RHEA:27465"/>
        <dbReference type="ChEBI" id="CHEBI:15378"/>
        <dbReference type="ChEBI" id="CHEBI:30616"/>
        <dbReference type="ChEBI" id="CHEBI:33019"/>
        <dbReference type="ChEBI" id="CHEBI:59967"/>
        <dbReference type="ChEBI" id="CHEBI:61593"/>
        <dbReference type="EC" id="2.7.7.70"/>
    </reaction>
</comment>
<comment type="pathway">
    <text evidence="1">Nucleotide-sugar biosynthesis; ADP-L-glycero-beta-D-manno-heptose biosynthesis; ADP-L-glycero-beta-D-manno-heptose from D-glycero-beta-D-manno-heptose 7-phosphate: step 1/4.</text>
</comment>
<comment type="pathway">
    <text evidence="1">Nucleotide-sugar biosynthesis; ADP-L-glycero-beta-D-manno-heptose biosynthesis; ADP-L-glycero-beta-D-manno-heptose from D-glycero-beta-D-manno-heptose 7-phosphate: step 3/4.</text>
</comment>
<comment type="subunit">
    <text evidence="1">Homodimer.</text>
</comment>
<comment type="similarity">
    <text evidence="1">In the N-terminal section; belongs to the carbohydrate kinase PfkB family.</text>
</comment>
<comment type="similarity">
    <text evidence="1">In the C-terminal section; belongs to the cytidylyltransferase family.</text>
</comment>
<gene>
    <name evidence="1" type="primary">hldE</name>
    <name type="ordered locus">YpAngola_A0292</name>
</gene>
<accession>A9R7D5</accession>
<feature type="chain" id="PRO_1000185829" description="Bifunctional protein HldE">
    <location>
        <begin position="1"/>
        <end position="476"/>
    </location>
</feature>
<feature type="region of interest" description="Ribokinase">
    <location>
        <begin position="1"/>
        <end position="318"/>
    </location>
</feature>
<feature type="region of interest" description="Cytidylyltransferase">
    <location>
        <begin position="344"/>
        <end position="476"/>
    </location>
</feature>
<feature type="active site" evidence="1">
    <location>
        <position position="264"/>
    </location>
</feature>
<feature type="binding site" evidence="1">
    <location>
        <begin position="195"/>
        <end position="198"/>
    </location>
    <ligand>
        <name>ATP</name>
        <dbReference type="ChEBI" id="CHEBI:30616"/>
    </ligand>
</feature>
<proteinExistence type="inferred from homology"/>
<evidence type="ECO:0000255" key="1">
    <source>
        <dbReference type="HAMAP-Rule" id="MF_01603"/>
    </source>
</evidence>
<organism>
    <name type="scientific">Yersinia pestis bv. Antiqua (strain Angola)</name>
    <dbReference type="NCBI Taxonomy" id="349746"/>
    <lineage>
        <taxon>Bacteria</taxon>
        <taxon>Pseudomonadati</taxon>
        <taxon>Pseudomonadota</taxon>
        <taxon>Gammaproteobacteria</taxon>
        <taxon>Enterobacterales</taxon>
        <taxon>Yersiniaceae</taxon>
        <taxon>Yersinia</taxon>
    </lineage>
</organism>
<keyword id="KW-0067">ATP-binding</keyword>
<keyword id="KW-0119">Carbohydrate metabolism</keyword>
<keyword id="KW-0418">Kinase</keyword>
<keyword id="KW-0511">Multifunctional enzyme</keyword>
<keyword id="KW-0547">Nucleotide-binding</keyword>
<keyword id="KW-0548">Nucleotidyltransferase</keyword>
<keyword id="KW-0808">Transferase</keyword>
<reference key="1">
    <citation type="journal article" date="2010" name="J. Bacteriol.">
        <title>Genome sequence of the deep-rooted Yersinia pestis strain Angola reveals new insights into the evolution and pangenome of the plague bacterium.</title>
        <authorList>
            <person name="Eppinger M."/>
            <person name="Worsham P.L."/>
            <person name="Nikolich M.P."/>
            <person name="Riley D.R."/>
            <person name="Sebastian Y."/>
            <person name="Mou S."/>
            <person name="Achtman M."/>
            <person name="Lindler L.E."/>
            <person name="Ravel J."/>
        </authorList>
    </citation>
    <scope>NUCLEOTIDE SEQUENCE [LARGE SCALE GENOMIC DNA]</scope>
    <source>
        <strain>Angola</strain>
    </source>
</reference>
<dbReference type="EC" id="2.7.1.167" evidence="1"/>
<dbReference type="EC" id="2.7.7.70" evidence="1"/>
<dbReference type="EMBL" id="CP000901">
    <property type="protein sequence ID" value="ABX88419.1"/>
    <property type="molecule type" value="Genomic_DNA"/>
</dbReference>
<dbReference type="RefSeq" id="WP_002212193.1">
    <property type="nucleotide sequence ID" value="NZ_CP009935.1"/>
</dbReference>
<dbReference type="SMR" id="A9R7D5"/>
<dbReference type="GeneID" id="57973970"/>
<dbReference type="KEGG" id="ypg:YpAngola_A0292"/>
<dbReference type="PATRIC" id="fig|349746.12.peg.1241"/>
<dbReference type="UniPathway" id="UPA00356">
    <property type="reaction ID" value="UER00437"/>
</dbReference>
<dbReference type="UniPathway" id="UPA00356">
    <property type="reaction ID" value="UER00439"/>
</dbReference>
<dbReference type="GO" id="GO:0005829">
    <property type="term" value="C:cytosol"/>
    <property type="evidence" value="ECO:0007669"/>
    <property type="project" value="TreeGrafter"/>
</dbReference>
<dbReference type="GO" id="GO:0005524">
    <property type="term" value="F:ATP binding"/>
    <property type="evidence" value="ECO:0007669"/>
    <property type="project" value="UniProtKB-UniRule"/>
</dbReference>
<dbReference type="GO" id="GO:0033785">
    <property type="term" value="F:heptose 7-phosphate kinase activity"/>
    <property type="evidence" value="ECO:0007669"/>
    <property type="project" value="UniProtKB-UniRule"/>
</dbReference>
<dbReference type="GO" id="GO:0033786">
    <property type="term" value="F:heptose-1-phosphate adenylyltransferase activity"/>
    <property type="evidence" value="ECO:0007669"/>
    <property type="project" value="UniProtKB-UniRule"/>
</dbReference>
<dbReference type="GO" id="GO:0016773">
    <property type="term" value="F:phosphotransferase activity, alcohol group as acceptor"/>
    <property type="evidence" value="ECO:0007669"/>
    <property type="project" value="InterPro"/>
</dbReference>
<dbReference type="GO" id="GO:0097171">
    <property type="term" value="P:ADP-L-glycero-beta-D-manno-heptose biosynthetic process"/>
    <property type="evidence" value="ECO:0007669"/>
    <property type="project" value="UniProtKB-UniPathway"/>
</dbReference>
<dbReference type="CDD" id="cd01172">
    <property type="entry name" value="RfaE_like"/>
    <property type="match status" value="1"/>
</dbReference>
<dbReference type="FunFam" id="3.40.1190.20:FF:000002">
    <property type="entry name" value="Bifunctional protein HldE"/>
    <property type="match status" value="1"/>
</dbReference>
<dbReference type="FunFam" id="3.40.50.620:FF:000028">
    <property type="entry name" value="Bifunctional protein HldE"/>
    <property type="match status" value="1"/>
</dbReference>
<dbReference type="Gene3D" id="3.40.1190.20">
    <property type="match status" value="1"/>
</dbReference>
<dbReference type="Gene3D" id="3.40.50.620">
    <property type="entry name" value="HUPs"/>
    <property type="match status" value="1"/>
</dbReference>
<dbReference type="HAMAP" id="MF_01603">
    <property type="entry name" value="HldE"/>
    <property type="match status" value="1"/>
</dbReference>
<dbReference type="InterPro" id="IPR023030">
    <property type="entry name" value="Bifunc_HldE"/>
</dbReference>
<dbReference type="InterPro" id="IPR002173">
    <property type="entry name" value="Carboh/pur_kinase_PfkB_CS"/>
</dbReference>
<dbReference type="InterPro" id="IPR004821">
    <property type="entry name" value="Cyt_trans-like"/>
</dbReference>
<dbReference type="InterPro" id="IPR011611">
    <property type="entry name" value="PfkB_dom"/>
</dbReference>
<dbReference type="InterPro" id="IPR011913">
    <property type="entry name" value="RfaE_dom_I"/>
</dbReference>
<dbReference type="InterPro" id="IPR011914">
    <property type="entry name" value="RfaE_dom_II"/>
</dbReference>
<dbReference type="InterPro" id="IPR029056">
    <property type="entry name" value="Ribokinase-like"/>
</dbReference>
<dbReference type="InterPro" id="IPR014729">
    <property type="entry name" value="Rossmann-like_a/b/a_fold"/>
</dbReference>
<dbReference type="NCBIfam" id="TIGR00125">
    <property type="entry name" value="cyt_tran_rel"/>
    <property type="match status" value="1"/>
</dbReference>
<dbReference type="NCBIfam" id="NF008454">
    <property type="entry name" value="PRK11316.1"/>
    <property type="match status" value="1"/>
</dbReference>
<dbReference type="NCBIfam" id="TIGR02198">
    <property type="entry name" value="rfaE_dom_I"/>
    <property type="match status" value="1"/>
</dbReference>
<dbReference type="NCBIfam" id="TIGR02199">
    <property type="entry name" value="rfaE_dom_II"/>
    <property type="match status" value="1"/>
</dbReference>
<dbReference type="PANTHER" id="PTHR46969">
    <property type="entry name" value="BIFUNCTIONAL PROTEIN HLDE"/>
    <property type="match status" value="1"/>
</dbReference>
<dbReference type="PANTHER" id="PTHR46969:SF1">
    <property type="entry name" value="BIFUNCTIONAL PROTEIN HLDE"/>
    <property type="match status" value="1"/>
</dbReference>
<dbReference type="Pfam" id="PF01467">
    <property type="entry name" value="CTP_transf_like"/>
    <property type="match status" value="1"/>
</dbReference>
<dbReference type="Pfam" id="PF00294">
    <property type="entry name" value="PfkB"/>
    <property type="match status" value="1"/>
</dbReference>
<dbReference type="SUPFAM" id="SSF52374">
    <property type="entry name" value="Nucleotidylyl transferase"/>
    <property type="match status" value="1"/>
</dbReference>
<dbReference type="SUPFAM" id="SSF53613">
    <property type="entry name" value="Ribokinase-like"/>
    <property type="match status" value="1"/>
</dbReference>
<dbReference type="PROSITE" id="PS00583">
    <property type="entry name" value="PFKB_KINASES_1"/>
    <property type="match status" value="1"/>
</dbReference>
<sequence>MKVTLPDFRRAGVLVVGDVMLDRYWYGPTCRISPEAPVPVVKVDTIEERPGGAANVAMNIASLGAVARLVGLTGIDDAARALICKLSEVRVRCDFVSVPTHPTITKLRVLSRNQQLIRLDFEEGFDGVDPTPIFERIQLALPQIGALVLSDYAKGALNSVQPMIQLARKANVPVLIDPKGSDFERYRGATLLTPNLSEFEAVVGRCKNEEELVNRGMQLVADFELSALLVTRSEQGMTLLQLGKPPLHLPTQAKEVFDVTGAGDTVIGVLAAALAAGNSLEESCFLANAAAGVVVGKLGTSTVSPIELENAIRGRAETGFGVMDEQQLKIAVAQARQRGEKVVMTNGIFDILHAGHVSYLANARKLGDRLIVAVNSDASTKRLKGEKRPVNPLEQRMVVLGALEAVDWVVPFEEDTPQRLIADILPDLLVKGGDYKPHEIAGSEEVWAAGGEVKVLNFEDGVSTTNIIQSIKNGRG</sequence>
<name>HLDE_YERPG</name>
<protein>
    <recommendedName>
        <fullName evidence="1">Bifunctional protein HldE</fullName>
    </recommendedName>
    <domain>
        <recommendedName>
            <fullName evidence="1">D-beta-D-heptose 7-phosphate kinase</fullName>
            <ecNumber evidence="1">2.7.1.167</ecNumber>
        </recommendedName>
        <alternativeName>
            <fullName evidence="1">D-beta-D-heptose 7-phosphotransferase</fullName>
        </alternativeName>
        <alternativeName>
            <fullName evidence="1">D-glycero-beta-D-manno-heptose-7-phosphate kinase</fullName>
        </alternativeName>
    </domain>
    <domain>
        <recommendedName>
            <fullName evidence="1">D-beta-D-heptose 1-phosphate adenylyltransferase</fullName>
            <ecNumber evidence="1">2.7.7.70</ecNumber>
        </recommendedName>
        <alternativeName>
            <fullName evidence="1">D-glycero-beta-D-manno-heptose 1-phosphate adenylyltransferase</fullName>
        </alternativeName>
    </domain>
</protein>